<comment type="function">
    <text evidence="1">Involved in transcription antitermination. Required for transcription of ribosomal RNA (rRNA) genes. Binds specifically to the boxA antiterminator sequence of the ribosomal RNA (rrn) operons.</text>
</comment>
<comment type="similarity">
    <text evidence="1">Belongs to the NusB family.</text>
</comment>
<reference key="1">
    <citation type="journal article" date="2005" name="J. Bacteriol.">
        <title>Whole-genome sequencing of Staphylococcus haemolyticus uncovers the extreme plasticity of its genome and the evolution of human-colonizing staphylococcal species.</title>
        <authorList>
            <person name="Takeuchi F."/>
            <person name="Watanabe S."/>
            <person name="Baba T."/>
            <person name="Yuzawa H."/>
            <person name="Ito T."/>
            <person name="Morimoto Y."/>
            <person name="Kuroda M."/>
            <person name="Cui L."/>
            <person name="Takahashi M."/>
            <person name="Ankai A."/>
            <person name="Baba S."/>
            <person name="Fukui S."/>
            <person name="Lee J.C."/>
            <person name="Hiramatsu K."/>
        </authorList>
    </citation>
    <scope>NUCLEOTIDE SEQUENCE [LARGE SCALE GENOMIC DNA]</scope>
    <source>
        <strain>JCSC1435</strain>
    </source>
</reference>
<name>NUSB_STAHJ</name>
<evidence type="ECO:0000255" key="1">
    <source>
        <dbReference type="HAMAP-Rule" id="MF_00073"/>
    </source>
</evidence>
<sequence>MSRKESRMQAFQTLFQLEMKDTELTINEAINFIKDDEPELDFDFIHWLVTGVKDHEPVLDDTIKPHLKDWSLQRLLKTDRIILRMATFELLHSDTPPKVIINEAVELAKQFSDDEHYKFINGVLSNIK</sequence>
<dbReference type="EMBL" id="AP006716">
    <property type="protein sequence ID" value="BAE04700.1"/>
    <property type="molecule type" value="Genomic_DNA"/>
</dbReference>
<dbReference type="RefSeq" id="WP_011275687.1">
    <property type="nucleotide sequence ID" value="NC_007168.1"/>
</dbReference>
<dbReference type="SMR" id="Q4L6M5"/>
<dbReference type="GeneID" id="93780790"/>
<dbReference type="KEGG" id="sha:SH1391"/>
<dbReference type="eggNOG" id="COG0781">
    <property type="taxonomic scope" value="Bacteria"/>
</dbReference>
<dbReference type="HOGENOM" id="CLU_087843_3_3_9"/>
<dbReference type="OrthoDB" id="9811381at2"/>
<dbReference type="Proteomes" id="UP000000543">
    <property type="component" value="Chromosome"/>
</dbReference>
<dbReference type="GO" id="GO:0005829">
    <property type="term" value="C:cytosol"/>
    <property type="evidence" value="ECO:0007669"/>
    <property type="project" value="TreeGrafter"/>
</dbReference>
<dbReference type="GO" id="GO:0003723">
    <property type="term" value="F:RNA binding"/>
    <property type="evidence" value="ECO:0007669"/>
    <property type="project" value="UniProtKB-UniRule"/>
</dbReference>
<dbReference type="GO" id="GO:0006353">
    <property type="term" value="P:DNA-templated transcription termination"/>
    <property type="evidence" value="ECO:0007669"/>
    <property type="project" value="UniProtKB-UniRule"/>
</dbReference>
<dbReference type="GO" id="GO:0031564">
    <property type="term" value="P:transcription antitermination"/>
    <property type="evidence" value="ECO:0007669"/>
    <property type="project" value="UniProtKB-KW"/>
</dbReference>
<dbReference type="Gene3D" id="1.10.940.10">
    <property type="entry name" value="NusB-like"/>
    <property type="match status" value="1"/>
</dbReference>
<dbReference type="HAMAP" id="MF_00073">
    <property type="entry name" value="NusB"/>
    <property type="match status" value="1"/>
</dbReference>
<dbReference type="InterPro" id="IPR035926">
    <property type="entry name" value="NusB-like_sf"/>
</dbReference>
<dbReference type="InterPro" id="IPR011605">
    <property type="entry name" value="NusB_fam"/>
</dbReference>
<dbReference type="InterPro" id="IPR006027">
    <property type="entry name" value="NusB_RsmB_TIM44"/>
</dbReference>
<dbReference type="NCBIfam" id="TIGR01951">
    <property type="entry name" value="nusB"/>
    <property type="match status" value="1"/>
</dbReference>
<dbReference type="PANTHER" id="PTHR11078:SF3">
    <property type="entry name" value="ANTITERMINATION NUSB DOMAIN-CONTAINING PROTEIN"/>
    <property type="match status" value="1"/>
</dbReference>
<dbReference type="PANTHER" id="PTHR11078">
    <property type="entry name" value="N UTILIZATION SUBSTANCE PROTEIN B-RELATED"/>
    <property type="match status" value="1"/>
</dbReference>
<dbReference type="Pfam" id="PF01029">
    <property type="entry name" value="NusB"/>
    <property type="match status" value="1"/>
</dbReference>
<dbReference type="SUPFAM" id="SSF48013">
    <property type="entry name" value="NusB-like"/>
    <property type="match status" value="1"/>
</dbReference>
<gene>
    <name evidence="1" type="primary">nusB</name>
    <name type="ordered locus">SH1391</name>
</gene>
<feature type="chain" id="PRO_0000265600" description="Transcription antitermination protein NusB">
    <location>
        <begin position="1"/>
        <end position="128"/>
    </location>
</feature>
<protein>
    <recommendedName>
        <fullName evidence="1">Transcription antitermination protein NusB</fullName>
    </recommendedName>
    <alternativeName>
        <fullName evidence="1">Antitermination factor NusB</fullName>
    </alternativeName>
</protein>
<organism>
    <name type="scientific">Staphylococcus haemolyticus (strain JCSC1435)</name>
    <dbReference type="NCBI Taxonomy" id="279808"/>
    <lineage>
        <taxon>Bacteria</taxon>
        <taxon>Bacillati</taxon>
        <taxon>Bacillota</taxon>
        <taxon>Bacilli</taxon>
        <taxon>Bacillales</taxon>
        <taxon>Staphylococcaceae</taxon>
        <taxon>Staphylococcus</taxon>
    </lineage>
</organism>
<keyword id="KW-0694">RNA-binding</keyword>
<keyword id="KW-0804">Transcription</keyword>
<keyword id="KW-0889">Transcription antitermination</keyword>
<keyword id="KW-0805">Transcription regulation</keyword>
<proteinExistence type="inferred from homology"/>
<accession>Q4L6M5</accession>